<feature type="chain" id="PRO_1000130421" description="Ureidoglycolate lyase">
    <location>
        <begin position="1"/>
        <end position="166"/>
    </location>
</feature>
<evidence type="ECO:0000255" key="1">
    <source>
        <dbReference type="HAMAP-Rule" id="MF_00616"/>
    </source>
</evidence>
<protein>
    <recommendedName>
        <fullName evidence="1">Ureidoglycolate lyase</fullName>
        <ecNumber evidence="1">4.3.2.3</ecNumber>
    </recommendedName>
    <alternativeName>
        <fullName evidence="1">Ureidoglycolatase</fullName>
    </alternativeName>
</protein>
<proteinExistence type="inferred from homology"/>
<sequence length="166" mass="18382">MPEFLDIRPLTSAAFAAFGEVIEADPASMRLINGGTTERFHALAAAEAAGEGARVIINLFRGQPRNFPYDVDMMERHPFGSQSFSPVSGRPFLVVVSEDESGRPGRPQVFLARGDQGVNYRRNVWHHPLMALGEVSDFLVVDRDGAGNNLEEFFFETPYIIKEPAL</sequence>
<accession>B5ZZ10</accession>
<dbReference type="EC" id="4.3.2.3" evidence="1"/>
<dbReference type="EMBL" id="CP001191">
    <property type="protein sequence ID" value="ACI56153.1"/>
    <property type="molecule type" value="Genomic_DNA"/>
</dbReference>
<dbReference type="RefSeq" id="WP_012558588.1">
    <property type="nucleotide sequence ID" value="NC_011369.1"/>
</dbReference>
<dbReference type="SMR" id="B5ZZ10"/>
<dbReference type="STRING" id="395492.Rleg2_2885"/>
<dbReference type="KEGG" id="rlt:Rleg2_2885"/>
<dbReference type="eggNOG" id="COG3194">
    <property type="taxonomic scope" value="Bacteria"/>
</dbReference>
<dbReference type="HOGENOM" id="CLU_070848_1_0_5"/>
<dbReference type="UniPathway" id="UPA00395"/>
<dbReference type="Proteomes" id="UP000008330">
    <property type="component" value="Chromosome"/>
</dbReference>
<dbReference type="GO" id="GO:0004848">
    <property type="term" value="F:ureidoglycolate hydrolase activity"/>
    <property type="evidence" value="ECO:0007669"/>
    <property type="project" value="InterPro"/>
</dbReference>
<dbReference type="GO" id="GO:0050385">
    <property type="term" value="F:ureidoglycolate lyase activity"/>
    <property type="evidence" value="ECO:0007669"/>
    <property type="project" value="UniProtKB-UniRule"/>
</dbReference>
<dbReference type="GO" id="GO:0000256">
    <property type="term" value="P:allantoin catabolic process"/>
    <property type="evidence" value="ECO:0007669"/>
    <property type="project" value="UniProtKB-UniRule"/>
</dbReference>
<dbReference type="GO" id="GO:0006145">
    <property type="term" value="P:purine nucleobase catabolic process"/>
    <property type="evidence" value="ECO:0007669"/>
    <property type="project" value="UniProtKB-UniRule"/>
</dbReference>
<dbReference type="CDD" id="cd20298">
    <property type="entry name" value="cupin_UAH"/>
    <property type="match status" value="1"/>
</dbReference>
<dbReference type="Gene3D" id="2.60.120.480">
    <property type="entry name" value="Ureidoglycolate hydrolase"/>
    <property type="match status" value="1"/>
</dbReference>
<dbReference type="HAMAP" id="MF_00616">
    <property type="entry name" value="Ureidogly_lyase"/>
    <property type="match status" value="1"/>
</dbReference>
<dbReference type="InterPro" id="IPR011051">
    <property type="entry name" value="RmlC_Cupin_sf"/>
</dbReference>
<dbReference type="InterPro" id="IPR047233">
    <property type="entry name" value="UAH_cupin"/>
</dbReference>
<dbReference type="InterPro" id="IPR007247">
    <property type="entry name" value="Ureidogly_lyase"/>
</dbReference>
<dbReference type="InterPro" id="IPR023525">
    <property type="entry name" value="Ureidogly_lyase_bac"/>
</dbReference>
<dbReference type="InterPro" id="IPR024060">
    <property type="entry name" value="Ureidoglycolate_lyase_dom_sf"/>
</dbReference>
<dbReference type="NCBIfam" id="NF002951">
    <property type="entry name" value="PRK03606.2-2"/>
    <property type="match status" value="1"/>
</dbReference>
<dbReference type="NCBIfam" id="NF009932">
    <property type="entry name" value="PRK13395.1"/>
    <property type="match status" value="1"/>
</dbReference>
<dbReference type="PANTHER" id="PTHR21221">
    <property type="entry name" value="UREIDOGLYCOLATE HYDROLASE"/>
    <property type="match status" value="1"/>
</dbReference>
<dbReference type="PANTHER" id="PTHR21221:SF1">
    <property type="entry name" value="UREIDOGLYCOLATE LYASE"/>
    <property type="match status" value="1"/>
</dbReference>
<dbReference type="Pfam" id="PF04115">
    <property type="entry name" value="Ureidogly_lyase"/>
    <property type="match status" value="1"/>
</dbReference>
<dbReference type="PIRSF" id="PIRSF017306">
    <property type="entry name" value="Ureidogly_hydro"/>
    <property type="match status" value="1"/>
</dbReference>
<dbReference type="SUPFAM" id="SSF51182">
    <property type="entry name" value="RmlC-like cupins"/>
    <property type="match status" value="1"/>
</dbReference>
<name>ALLA_RHILW</name>
<organism>
    <name type="scientific">Rhizobium leguminosarum bv. trifolii (strain WSM2304)</name>
    <dbReference type="NCBI Taxonomy" id="395492"/>
    <lineage>
        <taxon>Bacteria</taxon>
        <taxon>Pseudomonadati</taxon>
        <taxon>Pseudomonadota</taxon>
        <taxon>Alphaproteobacteria</taxon>
        <taxon>Hyphomicrobiales</taxon>
        <taxon>Rhizobiaceae</taxon>
        <taxon>Rhizobium/Agrobacterium group</taxon>
        <taxon>Rhizobium</taxon>
    </lineage>
</organism>
<reference key="1">
    <citation type="journal article" date="2010" name="Stand. Genomic Sci.">
        <title>Complete genome sequence of Rhizobium leguminosarum bv trifolii strain WSM2304, an effective microsymbiont of the South American clover Trifolium polymorphum.</title>
        <authorList>
            <person name="Reeve W."/>
            <person name="O'Hara G."/>
            <person name="Chain P."/>
            <person name="Ardley J."/>
            <person name="Brau L."/>
            <person name="Nandesena K."/>
            <person name="Tiwari R."/>
            <person name="Malfatti S."/>
            <person name="Kiss H."/>
            <person name="Lapidus A."/>
            <person name="Copeland A."/>
            <person name="Nolan M."/>
            <person name="Land M."/>
            <person name="Ivanova N."/>
            <person name="Mavromatis K."/>
            <person name="Markowitz V."/>
            <person name="Kyrpides N."/>
            <person name="Melino V."/>
            <person name="Denton M."/>
            <person name="Yates R."/>
            <person name="Howieson J."/>
        </authorList>
    </citation>
    <scope>NUCLEOTIDE SEQUENCE [LARGE SCALE GENOMIC DNA]</scope>
    <source>
        <strain>WSM2304</strain>
    </source>
</reference>
<keyword id="KW-0456">Lyase</keyword>
<keyword id="KW-0659">Purine metabolism</keyword>
<keyword id="KW-1185">Reference proteome</keyword>
<comment type="function">
    <text evidence="1">Catalyzes the catabolism of the allantoin degradation intermediate (S)-ureidoglycolate, generating urea and glyoxylate. Involved in the utilization of allantoin as nitrogen source.</text>
</comment>
<comment type="catalytic activity">
    <reaction evidence="1">
        <text>(S)-ureidoglycolate = urea + glyoxylate</text>
        <dbReference type="Rhea" id="RHEA:11304"/>
        <dbReference type="ChEBI" id="CHEBI:16199"/>
        <dbReference type="ChEBI" id="CHEBI:36655"/>
        <dbReference type="ChEBI" id="CHEBI:57296"/>
        <dbReference type="EC" id="4.3.2.3"/>
    </reaction>
</comment>
<comment type="cofactor">
    <cofactor evidence="1">
        <name>Ni(2+)</name>
        <dbReference type="ChEBI" id="CHEBI:49786"/>
    </cofactor>
</comment>
<comment type="pathway">
    <text evidence="1">Nitrogen metabolism; (S)-allantoin degradation.</text>
</comment>
<comment type="subunit">
    <text evidence="1">Homodimer.</text>
</comment>
<comment type="similarity">
    <text evidence="1">Belongs to the ureidoglycolate lyase family.</text>
</comment>
<gene>
    <name evidence="1" type="primary">allA</name>
    <name type="ordered locus">Rleg2_2885</name>
</gene>